<keyword id="KW-0975">Bacterial flagellum</keyword>
<keyword id="KW-0997">Cell inner membrane</keyword>
<keyword id="KW-1003">Cell membrane</keyword>
<keyword id="KW-0145">Chemotaxis</keyword>
<keyword id="KW-0283">Flagellar rotation</keyword>
<keyword id="KW-0472">Membrane</keyword>
<keyword id="KW-1185">Reference proteome</keyword>
<comment type="function">
    <text evidence="1">FliM is one of three proteins (FliG, FliN, FliM) that forms the rotor-mounted switch complex (C ring), located at the base of the basal body. This complex interacts with the CheY and CheZ chemotaxis proteins, in addition to contacting components of the motor that determine the direction of flagellar rotation (By similarity).</text>
</comment>
<comment type="subcellular location">
    <subcellularLocation>
        <location evidence="1">Cell inner membrane</location>
        <topology evidence="1">Peripheral membrane protein</topology>
    </subcellularLocation>
    <subcellularLocation>
        <location evidence="1">Bacterial flagellum basal body</location>
    </subcellularLocation>
</comment>
<comment type="similarity">
    <text evidence="2">Belongs to the FliM family.</text>
</comment>
<reference key="1">
    <citation type="journal article" date="2003" name="Proc. Natl. Acad. Sci. U.S.A.">
        <title>Reductive genome evolution in Buchnera aphidicola.</title>
        <authorList>
            <person name="van Ham R.C.H.J."/>
            <person name="Kamerbeek J."/>
            <person name="Palacios C."/>
            <person name="Rausell C."/>
            <person name="Abascal F."/>
            <person name="Bastolla U."/>
            <person name="Fernandez J.M."/>
            <person name="Jimenez L."/>
            <person name="Postigo M."/>
            <person name="Silva F.J."/>
            <person name="Tamames J."/>
            <person name="Viguera E."/>
            <person name="Latorre A."/>
            <person name="Valencia A."/>
            <person name="Moran F."/>
            <person name="Moya A."/>
        </authorList>
    </citation>
    <scope>NUCLEOTIDE SEQUENCE [LARGE SCALE GENOMIC DNA]</scope>
    <source>
        <strain>Bp</strain>
    </source>
</reference>
<name>FLIM_BUCBP</name>
<organism>
    <name type="scientific">Buchnera aphidicola subsp. Baizongia pistaciae (strain Bp)</name>
    <dbReference type="NCBI Taxonomy" id="224915"/>
    <lineage>
        <taxon>Bacteria</taxon>
        <taxon>Pseudomonadati</taxon>
        <taxon>Pseudomonadota</taxon>
        <taxon>Gammaproteobacteria</taxon>
        <taxon>Enterobacterales</taxon>
        <taxon>Erwiniaceae</taxon>
        <taxon>Buchnera</taxon>
    </lineage>
</organism>
<accession>Q89AZ4</accession>
<sequence length="331" mass="38924">MQSDVISRVKKIYIKNKIDISSKIFPYYQTTDYYLTYHNMKDRLENMHECFLKQFTKHISEYSDVDCKISFYKFIIQKFKNIKKNIKNNSISDCFEISPYKKLGIIFVSDNISDYLIEYLFGGCELKNSSNGLFKKLTLSTINIVKKMFKIILEQYYFLWNKVSLCKMKLILNRLQNLNEISNVNFINSKDTFVTFLFRLRIANKFGMLGICLPTSLSFQCNNEADVNSVHNVSHISYDNVVNTEIRKRLFQVIVYNCKIVLKIVLIENYITLSKIIAFKVGDILPIHMLDNVVAYSENVPILIGKYKMFKNKYVFCVVDYYNSTLNYKNG</sequence>
<evidence type="ECO:0000250" key="1"/>
<evidence type="ECO:0000305" key="2"/>
<feature type="chain" id="PRO_0000180926" description="Flagellar motor switch protein FliM">
    <location>
        <begin position="1"/>
        <end position="331"/>
    </location>
</feature>
<dbReference type="EMBL" id="AE016826">
    <property type="protein sequence ID" value="AAO26810.1"/>
    <property type="molecule type" value="Genomic_DNA"/>
</dbReference>
<dbReference type="RefSeq" id="WP_011091211.1">
    <property type="nucleotide sequence ID" value="NC_004545.1"/>
</dbReference>
<dbReference type="SMR" id="Q89AZ4"/>
<dbReference type="STRING" id="224915.bbp_074"/>
<dbReference type="KEGG" id="bab:bbp_074"/>
<dbReference type="eggNOG" id="COG1868">
    <property type="taxonomic scope" value="Bacteria"/>
</dbReference>
<dbReference type="HOGENOM" id="CLU_838567_0_0_6"/>
<dbReference type="OrthoDB" id="6553180at2"/>
<dbReference type="Proteomes" id="UP000000601">
    <property type="component" value="Chromosome"/>
</dbReference>
<dbReference type="GO" id="GO:0009425">
    <property type="term" value="C:bacterial-type flagellum basal body"/>
    <property type="evidence" value="ECO:0007669"/>
    <property type="project" value="UniProtKB-SubCell"/>
</dbReference>
<dbReference type="GO" id="GO:0005886">
    <property type="term" value="C:plasma membrane"/>
    <property type="evidence" value="ECO:0007669"/>
    <property type="project" value="UniProtKB-SubCell"/>
</dbReference>
<dbReference type="GO" id="GO:0003774">
    <property type="term" value="F:cytoskeletal motor activity"/>
    <property type="evidence" value="ECO:0007669"/>
    <property type="project" value="InterPro"/>
</dbReference>
<dbReference type="GO" id="GO:0071973">
    <property type="term" value="P:bacterial-type flagellum-dependent cell motility"/>
    <property type="evidence" value="ECO:0007669"/>
    <property type="project" value="InterPro"/>
</dbReference>
<dbReference type="GO" id="GO:0006935">
    <property type="term" value="P:chemotaxis"/>
    <property type="evidence" value="ECO:0007669"/>
    <property type="project" value="UniProtKB-KW"/>
</dbReference>
<dbReference type="Gene3D" id="3.40.1550.10">
    <property type="entry name" value="CheC-like"/>
    <property type="match status" value="1"/>
</dbReference>
<dbReference type="InterPro" id="IPR028976">
    <property type="entry name" value="CheC-like_sf"/>
</dbReference>
<dbReference type="InterPro" id="IPR001689">
    <property type="entry name" value="Flag_FliM"/>
</dbReference>
<dbReference type="InterPro" id="IPR001543">
    <property type="entry name" value="FliN-like_C"/>
</dbReference>
<dbReference type="InterPro" id="IPR036429">
    <property type="entry name" value="SpoA-like_sf"/>
</dbReference>
<dbReference type="Pfam" id="PF02154">
    <property type="entry name" value="FliM"/>
    <property type="match status" value="1"/>
</dbReference>
<dbReference type="Pfam" id="PF01052">
    <property type="entry name" value="FliMN_C"/>
    <property type="match status" value="1"/>
</dbReference>
<dbReference type="SUPFAM" id="SSF101801">
    <property type="entry name" value="Surface presentation of antigens (SPOA)"/>
    <property type="match status" value="1"/>
</dbReference>
<proteinExistence type="inferred from homology"/>
<gene>
    <name type="primary">fliM</name>
    <name type="ordered locus">bbp_074</name>
</gene>
<protein>
    <recommendedName>
        <fullName>Flagellar motor switch protein FliM</fullName>
    </recommendedName>
</protein>